<comment type="subcellular location">
    <subcellularLocation>
        <location evidence="1">Cell membrane</location>
        <topology evidence="1">Lipid-anchor</topology>
    </subcellularLocation>
</comment>
<comment type="similarity">
    <text evidence="1">Belongs to the UPF0257 family.</text>
</comment>
<reference key="1">
    <citation type="journal article" date="2008" name="DNA Res.">
        <title>Complete genome sequence and comparative analysis of the wild-type commensal Escherichia coli strain SE11 isolated from a healthy adult.</title>
        <authorList>
            <person name="Oshima K."/>
            <person name="Toh H."/>
            <person name="Ogura Y."/>
            <person name="Sasamoto H."/>
            <person name="Morita H."/>
            <person name="Park S.-H."/>
            <person name="Ooka T."/>
            <person name="Iyoda S."/>
            <person name="Taylor T.D."/>
            <person name="Hayashi T."/>
            <person name="Itoh K."/>
            <person name="Hattori M."/>
        </authorList>
    </citation>
    <scope>NUCLEOTIDE SEQUENCE [LARGE SCALE GENOMIC DNA]</scope>
    <source>
        <strain>SE11</strain>
    </source>
</reference>
<sequence length="236" mass="26507">MKYKLLPCLLAIFLTGCDRTEVTLSFTPEMASFSNEFDFDPLRGPVKDFTQTLMDEQGEVTKRVSGTLSEEGCFDSLELLDLENNTVVALVLDANYYRDAETLEKRVRLQGKCQLAELPSAGVSWETDDNGFVIKASSKQMQMEYRYDDQGYPLGKTTKSNDKTLSVSATPSTDPIKKLDYTAVTLLNNQRVGNVKQSCEYDSHANPVDCQLIIVDEGVKPAVERVYTIKNTIDYY</sequence>
<protein>
    <recommendedName>
        <fullName evidence="1">UPF0257 lipoprotein YnfC</fullName>
    </recommendedName>
</protein>
<accession>B6IB19</accession>
<proteinExistence type="inferred from homology"/>
<name>YNFC_ECOSE</name>
<keyword id="KW-1003">Cell membrane</keyword>
<keyword id="KW-0449">Lipoprotein</keyword>
<keyword id="KW-0472">Membrane</keyword>
<keyword id="KW-0564">Palmitate</keyword>
<keyword id="KW-0732">Signal</keyword>
<dbReference type="EMBL" id="AP009240">
    <property type="protein sequence ID" value="BAG77230.1"/>
    <property type="molecule type" value="Genomic_DNA"/>
</dbReference>
<dbReference type="RefSeq" id="WP_001321287.1">
    <property type="nucleotide sequence ID" value="NC_011415.1"/>
</dbReference>
<dbReference type="SMR" id="B6IB19"/>
<dbReference type="KEGG" id="ecy:ECSE_1706"/>
<dbReference type="HOGENOM" id="CLU_1174761_0_0_6"/>
<dbReference type="Proteomes" id="UP000008199">
    <property type="component" value="Chromosome"/>
</dbReference>
<dbReference type="GO" id="GO:0005886">
    <property type="term" value="C:plasma membrane"/>
    <property type="evidence" value="ECO:0007669"/>
    <property type="project" value="UniProtKB-SubCell"/>
</dbReference>
<dbReference type="HAMAP" id="MF_01065">
    <property type="entry name" value="UPF0257"/>
    <property type="match status" value="1"/>
</dbReference>
<dbReference type="InterPro" id="IPR010646">
    <property type="entry name" value="UPF0257"/>
</dbReference>
<dbReference type="NCBIfam" id="NF002798">
    <property type="entry name" value="PRK02939.1"/>
    <property type="match status" value="1"/>
</dbReference>
<dbReference type="Pfam" id="PF06788">
    <property type="entry name" value="UPF0257"/>
    <property type="match status" value="1"/>
</dbReference>
<dbReference type="PROSITE" id="PS51257">
    <property type="entry name" value="PROKAR_LIPOPROTEIN"/>
    <property type="match status" value="1"/>
</dbReference>
<evidence type="ECO:0000255" key="1">
    <source>
        <dbReference type="HAMAP-Rule" id="MF_01065"/>
    </source>
</evidence>
<gene>
    <name evidence="1" type="primary">ynfC</name>
    <name type="ordered locus">ECSE_1706</name>
</gene>
<organism>
    <name type="scientific">Escherichia coli (strain SE11)</name>
    <dbReference type="NCBI Taxonomy" id="409438"/>
    <lineage>
        <taxon>Bacteria</taxon>
        <taxon>Pseudomonadati</taxon>
        <taxon>Pseudomonadota</taxon>
        <taxon>Gammaproteobacteria</taxon>
        <taxon>Enterobacterales</taxon>
        <taxon>Enterobacteriaceae</taxon>
        <taxon>Escherichia</taxon>
    </lineage>
</organism>
<feature type="signal peptide" evidence="1">
    <location>
        <begin position="1"/>
        <end position="16"/>
    </location>
</feature>
<feature type="chain" id="PRO_1000136556" description="UPF0257 lipoprotein YnfC">
    <location>
        <begin position="17"/>
        <end position="236"/>
    </location>
</feature>
<feature type="lipid moiety-binding region" description="N-palmitoyl cysteine" evidence="1">
    <location>
        <position position="17"/>
    </location>
</feature>
<feature type="lipid moiety-binding region" description="S-diacylglycerol cysteine" evidence="1">
    <location>
        <position position="17"/>
    </location>
</feature>